<name>THIC_CALS4</name>
<dbReference type="EC" id="4.1.99.17" evidence="1"/>
<dbReference type="EMBL" id="AE008691">
    <property type="protein sequence ID" value="AAM24769.1"/>
    <property type="molecule type" value="Genomic_DNA"/>
</dbReference>
<dbReference type="RefSeq" id="WP_011025804.1">
    <property type="nucleotide sequence ID" value="NC_003869.1"/>
</dbReference>
<dbReference type="SMR" id="Q8R9P1"/>
<dbReference type="STRING" id="273068.TTE1565"/>
<dbReference type="KEGG" id="tte:TTE1565"/>
<dbReference type="eggNOG" id="COG0422">
    <property type="taxonomic scope" value="Bacteria"/>
</dbReference>
<dbReference type="HOGENOM" id="CLU_013181_2_2_9"/>
<dbReference type="OrthoDB" id="9805897at2"/>
<dbReference type="UniPathway" id="UPA00060"/>
<dbReference type="Proteomes" id="UP000000555">
    <property type="component" value="Chromosome"/>
</dbReference>
<dbReference type="GO" id="GO:0051539">
    <property type="term" value="F:4 iron, 4 sulfur cluster binding"/>
    <property type="evidence" value="ECO:0007669"/>
    <property type="project" value="UniProtKB-KW"/>
</dbReference>
<dbReference type="GO" id="GO:0016830">
    <property type="term" value="F:carbon-carbon lyase activity"/>
    <property type="evidence" value="ECO:0007669"/>
    <property type="project" value="InterPro"/>
</dbReference>
<dbReference type="GO" id="GO:0008270">
    <property type="term" value="F:zinc ion binding"/>
    <property type="evidence" value="ECO:0007669"/>
    <property type="project" value="UniProtKB-UniRule"/>
</dbReference>
<dbReference type="GO" id="GO:0009228">
    <property type="term" value="P:thiamine biosynthetic process"/>
    <property type="evidence" value="ECO:0007669"/>
    <property type="project" value="UniProtKB-KW"/>
</dbReference>
<dbReference type="GO" id="GO:0009229">
    <property type="term" value="P:thiamine diphosphate biosynthetic process"/>
    <property type="evidence" value="ECO:0007669"/>
    <property type="project" value="UniProtKB-UniRule"/>
</dbReference>
<dbReference type="FunFam" id="3.20.20.540:FF:000001">
    <property type="entry name" value="Phosphomethylpyrimidine synthase"/>
    <property type="match status" value="1"/>
</dbReference>
<dbReference type="Gene3D" id="6.10.250.620">
    <property type="match status" value="1"/>
</dbReference>
<dbReference type="Gene3D" id="3.20.20.540">
    <property type="entry name" value="Radical SAM ThiC family, central domain"/>
    <property type="match status" value="1"/>
</dbReference>
<dbReference type="HAMAP" id="MF_00089">
    <property type="entry name" value="ThiC"/>
    <property type="match status" value="1"/>
</dbReference>
<dbReference type="InterPro" id="IPR037509">
    <property type="entry name" value="ThiC"/>
</dbReference>
<dbReference type="InterPro" id="IPR038521">
    <property type="entry name" value="ThiC/Bza_core_dom"/>
</dbReference>
<dbReference type="InterPro" id="IPR002817">
    <property type="entry name" value="ThiC/BzaA/B"/>
</dbReference>
<dbReference type="NCBIfam" id="NF009895">
    <property type="entry name" value="PRK13352.1"/>
    <property type="match status" value="1"/>
</dbReference>
<dbReference type="NCBIfam" id="TIGR00190">
    <property type="entry name" value="thiC"/>
    <property type="match status" value="1"/>
</dbReference>
<dbReference type="PANTHER" id="PTHR30557:SF1">
    <property type="entry name" value="PHOSPHOMETHYLPYRIMIDINE SYNTHASE, CHLOROPLASTIC"/>
    <property type="match status" value="1"/>
</dbReference>
<dbReference type="PANTHER" id="PTHR30557">
    <property type="entry name" value="THIAMINE BIOSYNTHESIS PROTEIN THIC"/>
    <property type="match status" value="1"/>
</dbReference>
<dbReference type="Pfam" id="PF01964">
    <property type="entry name" value="ThiC_Rad_SAM"/>
    <property type="match status" value="1"/>
</dbReference>
<dbReference type="SFLD" id="SFLDF00407">
    <property type="entry name" value="phosphomethylpyrimidine_syntha"/>
    <property type="match status" value="1"/>
</dbReference>
<dbReference type="SFLD" id="SFLDG01114">
    <property type="entry name" value="phosphomethylpyrimidine_syntha"/>
    <property type="match status" value="1"/>
</dbReference>
<dbReference type="SFLD" id="SFLDS00113">
    <property type="entry name" value="Radical_SAM_Phosphomethylpyrim"/>
    <property type="match status" value="1"/>
</dbReference>
<keyword id="KW-0004">4Fe-4S</keyword>
<keyword id="KW-0408">Iron</keyword>
<keyword id="KW-0411">Iron-sulfur</keyword>
<keyword id="KW-0456">Lyase</keyword>
<keyword id="KW-0479">Metal-binding</keyword>
<keyword id="KW-1185">Reference proteome</keyword>
<keyword id="KW-0949">S-adenosyl-L-methionine</keyword>
<keyword id="KW-0784">Thiamine biosynthesis</keyword>
<keyword id="KW-0862">Zinc</keyword>
<feature type="chain" id="PRO_0000152844" description="Phosphomethylpyrimidine synthase">
    <location>
        <begin position="1"/>
        <end position="432"/>
    </location>
</feature>
<feature type="binding site" evidence="1">
    <location>
        <position position="66"/>
    </location>
    <ligand>
        <name>substrate</name>
    </ligand>
</feature>
<feature type="binding site" evidence="1">
    <location>
        <position position="95"/>
    </location>
    <ligand>
        <name>substrate</name>
    </ligand>
</feature>
<feature type="binding site" evidence="1">
    <location>
        <position position="124"/>
    </location>
    <ligand>
        <name>substrate</name>
    </ligand>
</feature>
<feature type="binding site" evidence="1">
    <location>
        <position position="163"/>
    </location>
    <ligand>
        <name>substrate</name>
    </ligand>
</feature>
<feature type="binding site" evidence="1">
    <location>
        <begin position="185"/>
        <end position="187"/>
    </location>
    <ligand>
        <name>substrate</name>
    </ligand>
</feature>
<feature type="binding site" evidence="1">
    <location>
        <begin position="226"/>
        <end position="229"/>
    </location>
    <ligand>
        <name>substrate</name>
    </ligand>
</feature>
<feature type="binding site" evidence="1">
    <location>
        <position position="265"/>
    </location>
    <ligand>
        <name>substrate</name>
    </ligand>
</feature>
<feature type="binding site" evidence="1">
    <location>
        <position position="269"/>
    </location>
    <ligand>
        <name>Zn(2+)</name>
        <dbReference type="ChEBI" id="CHEBI:29105"/>
    </ligand>
</feature>
<feature type="binding site" evidence="1">
    <location>
        <position position="292"/>
    </location>
    <ligand>
        <name>substrate</name>
    </ligand>
</feature>
<feature type="binding site" evidence="1">
    <location>
        <position position="333"/>
    </location>
    <ligand>
        <name>Zn(2+)</name>
        <dbReference type="ChEBI" id="CHEBI:29105"/>
    </ligand>
</feature>
<feature type="binding site" evidence="1">
    <location>
        <position position="409"/>
    </location>
    <ligand>
        <name>[4Fe-4S] cluster</name>
        <dbReference type="ChEBI" id="CHEBI:49883"/>
        <note>4Fe-4S-S-AdoMet</note>
    </ligand>
</feature>
<feature type="binding site" evidence="1">
    <location>
        <position position="412"/>
    </location>
    <ligand>
        <name>[4Fe-4S] cluster</name>
        <dbReference type="ChEBI" id="CHEBI:49883"/>
        <note>4Fe-4S-S-AdoMet</note>
    </ligand>
</feature>
<feature type="binding site" evidence="1">
    <location>
        <position position="416"/>
    </location>
    <ligand>
        <name>[4Fe-4S] cluster</name>
        <dbReference type="ChEBI" id="CHEBI:49883"/>
        <note>4Fe-4S-S-AdoMet</note>
    </ligand>
</feature>
<sequence>MTQLEYALSGIITKEMKIVADYEGVSEEFILEEVKKGEIVIPANVNHINLVPKGIGKGLSTKVNANIGTSDAFPEIGKEIEKLKVAIDAGADAVMDLSTGGDVNKSRREIIKNSSVPVGTVPMYQAAVESISRYGSIVAMPEEFIFKVIEEQAKDGVDFITVHCGLTLESLKRLKDNKRIMNVVSRGGAFTIAWMIHNEKENPLYQYFDRLLDIAKKYDVTLSLGDGLRPGCLEDATDAAQIQELIILGELVKKAREAGVQVMVEGPGHVPIDQIEANVKLQKSLCHNAPFYVLGPVVTDIAPGYDHITAAIGGAIAAFAGADFLCYVTPAEHLGLPDIQDVKEGVIAAKIAAHAADIAKGIKKAREKDLAMAKARANLDWNEQIQLSIDPEKAEKYRVTKNKPNVETCSMCGKFCAMQIVSEYLGTPTTSC</sequence>
<protein>
    <recommendedName>
        <fullName evidence="1">Phosphomethylpyrimidine synthase</fullName>
        <ecNumber evidence="1">4.1.99.17</ecNumber>
    </recommendedName>
    <alternativeName>
        <fullName evidence="1">Hydroxymethylpyrimidine phosphate synthase</fullName>
        <shortName evidence="1">HMP-P synthase</shortName>
        <shortName evidence="1">HMP-phosphate synthase</shortName>
        <shortName evidence="1">HMPP synthase</shortName>
    </alternativeName>
    <alternativeName>
        <fullName evidence="1">Thiamine biosynthesis protein ThiC</fullName>
    </alternativeName>
</protein>
<proteinExistence type="inferred from homology"/>
<evidence type="ECO:0000255" key="1">
    <source>
        <dbReference type="HAMAP-Rule" id="MF_00089"/>
    </source>
</evidence>
<accession>Q8R9P1</accession>
<organism>
    <name type="scientific">Caldanaerobacter subterraneus subsp. tengcongensis (strain DSM 15242 / JCM 11007 / NBRC 100824 / MB4)</name>
    <name type="common">Thermoanaerobacter tengcongensis</name>
    <dbReference type="NCBI Taxonomy" id="273068"/>
    <lineage>
        <taxon>Bacteria</taxon>
        <taxon>Bacillati</taxon>
        <taxon>Bacillota</taxon>
        <taxon>Clostridia</taxon>
        <taxon>Thermoanaerobacterales</taxon>
        <taxon>Thermoanaerobacteraceae</taxon>
        <taxon>Caldanaerobacter</taxon>
    </lineage>
</organism>
<gene>
    <name evidence="1" type="primary">thiC</name>
    <name type="ordered locus">TTE1565</name>
</gene>
<comment type="function">
    <text evidence="1">Catalyzes the synthesis of the hydroxymethylpyrimidine phosphate (HMP-P) moiety of thiamine from aminoimidazole ribotide (AIR) in a radical S-adenosyl-L-methionine (SAM)-dependent reaction.</text>
</comment>
<comment type="catalytic activity">
    <reaction evidence="1">
        <text>5-amino-1-(5-phospho-beta-D-ribosyl)imidazole + S-adenosyl-L-methionine = 4-amino-2-methyl-5-(phosphooxymethyl)pyrimidine + CO + 5'-deoxyadenosine + formate + L-methionine + 3 H(+)</text>
        <dbReference type="Rhea" id="RHEA:24840"/>
        <dbReference type="ChEBI" id="CHEBI:15378"/>
        <dbReference type="ChEBI" id="CHEBI:15740"/>
        <dbReference type="ChEBI" id="CHEBI:17245"/>
        <dbReference type="ChEBI" id="CHEBI:17319"/>
        <dbReference type="ChEBI" id="CHEBI:57844"/>
        <dbReference type="ChEBI" id="CHEBI:58354"/>
        <dbReference type="ChEBI" id="CHEBI:59789"/>
        <dbReference type="ChEBI" id="CHEBI:137981"/>
        <dbReference type="EC" id="4.1.99.17"/>
    </reaction>
</comment>
<comment type="cofactor">
    <cofactor evidence="1">
        <name>[4Fe-4S] cluster</name>
        <dbReference type="ChEBI" id="CHEBI:49883"/>
    </cofactor>
    <text evidence="1">Binds 1 [4Fe-4S] cluster per subunit. The cluster is coordinated with 3 cysteines and an exchangeable S-adenosyl-L-methionine.</text>
</comment>
<comment type="pathway">
    <text evidence="1">Cofactor biosynthesis; thiamine diphosphate biosynthesis.</text>
</comment>
<comment type="similarity">
    <text evidence="1">Belongs to the ThiC family.</text>
</comment>
<reference key="1">
    <citation type="journal article" date="2002" name="Genome Res.">
        <title>A complete sequence of the T. tengcongensis genome.</title>
        <authorList>
            <person name="Bao Q."/>
            <person name="Tian Y."/>
            <person name="Li W."/>
            <person name="Xu Z."/>
            <person name="Xuan Z."/>
            <person name="Hu S."/>
            <person name="Dong W."/>
            <person name="Yang J."/>
            <person name="Chen Y."/>
            <person name="Xue Y."/>
            <person name="Xu Y."/>
            <person name="Lai X."/>
            <person name="Huang L."/>
            <person name="Dong X."/>
            <person name="Ma Y."/>
            <person name="Ling L."/>
            <person name="Tan H."/>
            <person name="Chen R."/>
            <person name="Wang J."/>
            <person name="Yu J."/>
            <person name="Yang H."/>
        </authorList>
    </citation>
    <scope>NUCLEOTIDE SEQUENCE [LARGE SCALE GENOMIC DNA]</scope>
    <source>
        <strain>DSM 15242 / JCM 11007 / NBRC 100824 / MB4</strain>
    </source>
</reference>